<name>MASZ_COREF</name>
<evidence type="ECO:0000255" key="1">
    <source>
        <dbReference type="HAMAP-Rule" id="MF_00641"/>
    </source>
</evidence>
<organism>
    <name type="scientific">Corynebacterium efficiens (strain DSM 44549 / YS-314 / AJ 12310 / JCM 11189 / NBRC 100395)</name>
    <dbReference type="NCBI Taxonomy" id="196164"/>
    <lineage>
        <taxon>Bacteria</taxon>
        <taxon>Bacillati</taxon>
        <taxon>Actinomycetota</taxon>
        <taxon>Actinomycetes</taxon>
        <taxon>Mycobacteriales</taxon>
        <taxon>Corynebacteriaceae</taxon>
        <taxon>Corynebacterium</taxon>
    </lineage>
</organism>
<feature type="chain" id="PRO_0000166884" description="Malate synthase G">
    <location>
        <begin position="1"/>
        <end position="748"/>
    </location>
</feature>
<feature type="active site" description="Proton acceptor" evidence="1">
    <location>
        <position position="362"/>
    </location>
</feature>
<feature type="active site" description="Proton donor" evidence="1">
    <location>
        <position position="653"/>
    </location>
</feature>
<feature type="binding site" evidence="1">
    <location>
        <position position="141"/>
    </location>
    <ligand>
        <name>acetyl-CoA</name>
        <dbReference type="ChEBI" id="CHEBI:57288"/>
    </ligand>
</feature>
<feature type="binding site" evidence="1">
    <location>
        <begin position="148"/>
        <end position="149"/>
    </location>
    <ligand>
        <name>acetyl-CoA</name>
        <dbReference type="ChEBI" id="CHEBI:57288"/>
    </ligand>
</feature>
<feature type="binding site" evidence="1">
    <location>
        <position position="298"/>
    </location>
    <ligand>
        <name>acetyl-CoA</name>
        <dbReference type="ChEBI" id="CHEBI:57288"/>
    </ligand>
</feature>
<feature type="binding site" evidence="1">
    <location>
        <position position="335"/>
    </location>
    <ligand>
        <name>acetyl-CoA</name>
        <dbReference type="ChEBI" id="CHEBI:57288"/>
    </ligand>
</feature>
<feature type="binding site" evidence="1">
    <location>
        <position position="362"/>
    </location>
    <ligand>
        <name>glyoxylate</name>
        <dbReference type="ChEBI" id="CHEBI:36655"/>
    </ligand>
</feature>
<feature type="binding site" evidence="1">
    <location>
        <position position="453"/>
    </location>
    <ligand>
        <name>glyoxylate</name>
        <dbReference type="ChEBI" id="CHEBI:36655"/>
    </ligand>
</feature>
<feature type="binding site" evidence="1">
    <location>
        <position position="453"/>
    </location>
    <ligand>
        <name>Mg(2+)</name>
        <dbReference type="ChEBI" id="CHEBI:18420"/>
    </ligand>
</feature>
<feature type="binding site" evidence="1">
    <location>
        <begin position="478"/>
        <end position="481"/>
    </location>
    <ligand>
        <name>glyoxylate</name>
        <dbReference type="ChEBI" id="CHEBI:36655"/>
    </ligand>
</feature>
<feature type="binding site" evidence="1">
    <location>
        <position position="481"/>
    </location>
    <ligand>
        <name>Mg(2+)</name>
        <dbReference type="ChEBI" id="CHEBI:18420"/>
    </ligand>
</feature>
<feature type="binding site" evidence="1">
    <location>
        <position position="562"/>
    </location>
    <ligand>
        <name>acetyl-CoA</name>
        <dbReference type="ChEBI" id="CHEBI:57288"/>
    </ligand>
</feature>
<feature type="modified residue" description="Cysteine sulfenic acid (-SOH)" evidence="1">
    <location>
        <position position="639"/>
    </location>
</feature>
<keyword id="KW-0963">Cytoplasm</keyword>
<keyword id="KW-0329">Glyoxylate bypass</keyword>
<keyword id="KW-0460">Magnesium</keyword>
<keyword id="KW-0479">Metal-binding</keyword>
<keyword id="KW-0558">Oxidation</keyword>
<keyword id="KW-1185">Reference proteome</keyword>
<keyword id="KW-0808">Transferase</keyword>
<keyword id="KW-0816">Tricarboxylic acid cycle</keyword>
<protein>
    <recommendedName>
        <fullName evidence="1">Malate synthase G</fullName>
        <ecNumber evidence="1">2.3.3.9</ecNumber>
    </recommendedName>
</protein>
<reference key="1">
    <citation type="journal article" date="2003" name="Genome Res.">
        <title>Comparative complete genome sequence analysis of the amino acid replacements responsible for the thermostability of Corynebacterium efficiens.</title>
        <authorList>
            <person name="Nishio Y."/>
            <person name="Nakamura Y."/>
            <person name="Kawarabayasi Y."/>
            <person name="Usuda Y."/>
            <person name="Kimura E."/>
            <person name="Sugimoto S."/>
            <person name="Matsui K."/>
            <person name="Yamagishi A."/>
            <person name="Kikuchi H."/>
            <person name="Ikeo K."/>
            <person name="Gojobori T."/>
        </authorList>
    </citation>
    <scope>NUCLEOTIDE SEQUENCE [LARGE SCALE GENOMIC DNA]</scope>
    <source>
        <strain>DSM 44549 / YS-314 / AJ 12310 / JCM 11189 / NBRC 100395</strain>
    </source>
</reference>
<comment type="function">
    <text evidence="1">Involved in the glycolate utilization. Catalyzes the condensation and subsequent hydrolysis of acetyl-coenzyme A (acetyl-CoA) and glyoxylate to form malate and CoA.</text>
</comment>
<comment type="catalytic activity">
    <reaction evidence="1">
        <text>glyoxylate + acetyl-CoA + H2O = (S)-malate + CoA + H(+)</text>
        <dbReference type="Rhea" id="RHEA:18181"/>
        <dbReference type="ChEBI" id="CHEBI:15377"/>
        <dbReference type="ChEBI" id="CHEBI:15378"/>
        <dbReference type="ChEBI" id="CHEBI:15589"/>
        <dbReference type="ChEBI" id="CHEBI:36655"/>
        <dbReference type="ChEBI" id="CHEBI:57287"/>
        <dbReference type="ChEBI" id="CHEBI:57288"/>
        <dbReference type="EC" id="2.3.3.9"/>
    </reaction>
</comment>
<comment type="cofactor">
    <cofactor evidence="1">
        <name>Mg(2+)</name>
        <dbReference type="ChEBI" id="CHEBI:18420"/>
    </cofactor>
</comment>
<comment type="pathway">
    <text evidence="1">Carbohydrate metabolism; glyoxylate cycle; (S)-malate from isocitrate: step 2/2.</text>
</comment>
<comment type="subunit">
    <text evidence="1">Monomer.</text>
</comment>
<comment type="subcellular location">
    <subcellularLocation>
        <location evidence="1">Cytoplasm</location>
    </subcellularLocation>
</comment>
<comment type="similarity">
    <text evidence="1">Belongs to the malate synthase family. GlcB subfamily.</text>
</comment>
<gene>
    <name evidence="1" type="primary">glcB</name>
    <name type="synonym">masZ</name>
    <name type="ordered locus">CE2231</name>
</gene>
<accession>Q8FNB3</accession>
<dbReference type="EC" id="2.3.3.9" evidence="1"/>
<dbReference type="EMBL" id="BA000035">
    <property type="protein sequence ID" value="BAC19041.1"/>
    <property type="molecule type" value="Genomic_DNA"/>
</dbReference>
<dbReference type="SMR" id="Q8FNB3"/>
<dbReference type="STRING" id="196164.gene:10742662"/>
<dbReference type="KEGG" id="cef:CE2231"/>
<dbReference type="eggNOG" id="COG2225">
    <property type="taxonomic scope" value="Bacteria"/>
</dbReference>
<dbReference type="HOGENOM" id="CLU_028446_1_0_11"/>
<dbReference type="UniPathway" id="UPA00703">
    <property type="reaction ID" value="UER00720"/>
</dbReference>
<dbReference type="Proteomes" id="UP000001409">
    <property type="component" value="Chromosome"/>
</dbReference>
<dbReference type="GO" id="GO:0005829">
    <property type="term" value="C:cytosol"/>
    <property type="evidence" value="ECO:0007669"/>
    <property type="project" value="TreeGrafter"/>
</dbReference>
<dbReference type="GO" id="GO:0000287">
    <property type="term" value="F:magnesium ion binding"/>
    <property type="evidence" value="ECO:0007669"/>
    <property type="project" value="TreeGrafter"/>
</dbReference>
<dbReference type="GO" id="GO:0004474">
    <property type="term" value="F:malate synthase activity"/>
    <property type="evidence" value="ECO:0007669"/>
    <property type="project" value="UniProtKB-UniRule"/>
</dbReference>
<dbReference type="GO" id="GO:0009436">
    <property type="term" value="P:glyoxylate catabolic process"/>
    <property type="evidence" value="ECO:0007669"/>
    <property type="project" value="TreeGrafter"/>
</dbReference>
<dbReference type="GO" id="GO:0006097">
    <property type="term" value="P:glyoxylate cycle"/>
    <property type="evidence" value="ECO:0007669"/>
    <property type="project" value="UniProtKB-UniRule"/>
</dbReference>
<dbReference type="GO" id="GO:0006099">
    <property type="term" value="P:tricarboxylic acid cycle"/>
    <property type="evidence" value="ECO:0007669"/>
    <property type="project" value="UniProtKB-KW"/>
</dbReference>
<dbReference type="Gene3D" id="3.20.20.360">
    <property type="entry name" value="Malate synthase, domain 3"/>
    <property type="match status" value="2"/>
</dbReference>
<dbReference type="Gene3D" id="1.20.1220.12">
    <property type="entry name" value="Malate synthase, domain III"/>
    <property type="match status" value="1"/>
</dbReference>
<dbReference type="HAMAP" id="MF_00641">
    <property type="entry name" value="Malate_synth_G"/>
    <property type="match status" value="1"/>
</dbReference>
<dbReference type="InterPro" id="IPR044856">
    <property type="entry name" value="Malate_synth_C_sf"/>
</dbReference>
<dbReference type="InterPro" id="IPR011076">
    <property type="entry name" value="Malate_synth_sf"/>
</dbReference>
<dbReference type="InterPro" id="IPR001465">
    <property type="entry name" value="Malate_synthase_TIM"/>
</dbReference>
<dbReference type="InterPro" id="IPR006253">
    <property type="entry name" value="Malate_synthG"/>
</dbReference>
<dbReference type="InterPro" id="IPR048355">
    <property type="entry name" value="MS_C"/>
</dbReference>
<dbReference type="InterPro" id="IPR048356">
    <property type="entry name" value="MS_N"/>
</dbReference>
<dbReference type="InterPro" id="IPR046363">
    <property type="entry name" value="MS_N_TIM-barrel_dom"/>
</dbReference>
<dbReference type="InterPro" id="IPR048357">
    <property type="entry name" value="MSG_insertion"/>
</dbReference>
<dbReference type="NCBIfam" id="TIGR01345">
    <property type="entry name" value="malate_syn_G"/>
    <property type="match status" value="1"/>
</dbReference>
<dbReference type="NCBIfam" id="NF002825">
    <property type="entry name" value="PRK02999.1"/>
    <property type="match status" value="1"/>
</dbReference>
<dbReference type="PANTHER" id="PTHR42739">
    <property type="entry name" value="MALATE SYNTHASE G"/>
    <property type="match status" value="1"/>
</dbReference>
<dbReference type="PANTHER" id="PTHR42739:SF1">
    <property type="entry name" value="MALATE SYNTHASE G"/>
    <property type="match status" value="1"/>
</dbReference>
<dbReference type="Pfam" id="PF20659">
    <property type="entry name" value="MS_C"/>
    <property type="match status" value="1"/>
</dbReference>
<dbReference type="Pfam" id="PF20656">
    <property type="entry name" value="MS_N"/>
    <property type="match status" value="1"/>
</dbReference>
<dbReference type="Pfam" id="PF01274">
    <property type="entry name" value="MS_TIM-barrel"/>
    <property type="match status" value="1"/>
</dbReference>
<dbReference type="Pfam" id="PF20658">
    <property type="entry name" value="MSG_insertion"/>
    <property type="match status" value="1"/>
</dbReference>
<dbReference type="SUPFAM" id="SSF51645">
    <property type="entry name" value="Malate synthase G"/>
    <property type="match status" value="1"/>
</dbReference>
<sequence length="748" mass="83491">MPAHTRSLASKELCMNHQQIDAADKTERVTVGGMQVAKVLRDFLTESVLPRVGVDAERFWNGFGDIVRDMTPRNRELLARRDELQAQLDEYYRENPGKPDPEKYEAFLREIGYLVDEPAPAEIRTQNIDSEIATTAGPQLVVPILNARFALNAANARWGSLYDALYGTNAIPDEDGAERGAEYNPVRGQKVIQWGRDFLDAVLPLDGASHADVEKYNITDGKLAAHVNDGIYRLKDRDAYLGFTGYFEDPTSILLQNNGLHIELQIDPTHPIGKEDKTGLKDIILESAITTIMDFEDSVAAVDAEDKTLGYRNWFLLNTGELTEEVAKGDRTFTRKLNDDRVFIGKNGAELTLHGRSLLFVRNVGHLMTNPAILVDGEEIYEGIMDAIITTVCAIPGIAPQNKKKNSRKGSIYIVKPKQHGPEEVAFTNELFARVEDLLDLPRHTLKVGVMDEERRTSVNLDACIMEVADRLAFINTGFLDRTGDEIHTSMEAGAMVRKADMQTAPWKQAYEDNNVDAGIQRGLPGKAQIGKGMWAMTELMGEMLEKKIGQLREGANTAWVPSPTGATLHATHYHRVDVFKVQDELRAAGRRDSLGKILDVPVAPDTNWTDAEKREELDNNCQSILGYVVRWVEQGVGCSKVPDIHDIDLMEDRATLRISSQILANWLRHGVVTEEQVIESLERMAVVVDEQNAGDPNYLNMAPNFTESVAFQAARDLILKGTESPAGYTEPILHARRREFKELHGIK</sequence>
<proteinExistence type="inferred from homology"/>